<proteinExistence type="inferred from homology"/>
<comment type="function">
    <text evidence="1">Catalyzes the transamination of N(2)-succinylornithine and alpha-ketoglutarate into N(2)-succinylglutamate semialdehyde and glutamate. Can also act as an acetylornithine aminotransferase.</text>
</comment>
<comment type="catalytic activity">
    <reaction evidence="1">
        <text>N(2)-succinyl-L-ornithine + 2-oxoglutarate = N-succinyl-L-glutamate 5-semialdehyde + L-glutamate</text>
        <dbReference type="Rhea" id="RHEA:16953"/>
        <dbReference type="ChEBI" id="CHEBI:16810"/>
        <dbReference type="ChEBI" id="CHEBI:29985"/>
        <dbReference type="ChEBI" id="CHEBI:58514"/>
        <dbReference type="ChEBI" id="CHEBI:58520"/>
        <dbReference type="EC" id="2.6.1.81"/>
    </reaction>
</comment>
<comment type="cofactor">
    <cofactor evidence="1">
        <name>pyridoxal 5'-phosphate</name>
        <dbReference type="ChEBI" id="CHEBI:597326"/>
    </cofactor>
</comment>
<comment type="pathway">
    <text evidence="1">Amino-acid degradation; L-arginine degradation via AST pathway; L-glutamate and succinate from L-arginine: step 3/5.</text>
</comment>
<comment type="similarity">
    <text evidence="1">Belongs to the class-III pyridoxal-phosphate-dependent aminotransferase family. AstC subfamily.</text>
</comment>
<organism>
    <name type="scientific">Yersinia pseudotuberculosis serotype O:1b (strain IP 31758)</name>
    <dbReference type="NCBI Taxonomy" id="349747"/>
    <lineage>
        <taxon>Bacteria</taxon>
        <taxon>Pseudomonadati</taxon>
        <taxon>Pseudomonadota</taxon>
        <taxon>Gammaproteobacteria</taxon>
        <taxon>Enterobacterales</taxon>
        <taxon>Yersiniaceae</taxon>
        <taxon>Yersinia</taxon>
    </lineage>
</organism>
<gene>
    <name evidence="1" type="primary">astC</name>
    <name evidence="1" type="synonym">argM</name>
    <name type="ordered locus">YpsIP31758_2121</name>
</gene>
<protein>
    <recommendedName>
        <fullName evidence="1">Succinylornithine transaminase</fullName>
        <ecNumber evidence="1">2.6.1.81</ecNumber>
    </recommendedName>
    <alternativeName>
        <fullName evidence="1">Succinylornithine aminotransferase</fullName>
    </alternativeName>
</protein>
<feature type="chain" id="PRO_1000164400" description="Succinylornithine transaminase">
    <location>
        <begin position="1"/>
        <end position="414"/>
    </location>
</feature>
<feature type="modified residue" description="N6-(pyridoxal phosphate)lysine" evidence="1">
    <location>
        <position position="260"/>
    </location>
</feature>
<name>ASTC_YERP3</name>
<evidence type="ECO:0000255" key="1">
    <source>
        <dbReference type="HAMAP-Rule" id="MF_01173"/>
    </source>
</evidence>
<reference key="1">
    <citation type="journal article" date="2007" name="PLoS Genet.">
        <title>The complete genome sequence of Yersinia pseudotuberculosis IP31758, the causative agent of Far East scarlet-like fever.</title>
        <authorList>
            <person name="Eppinger M."/>
            <person name="Rosovitz M.J."/>
            <person name="Fricke W.F."/>
            <person name="Rasko D.A."/>
            <person name="Kokorina G."/>
            <person name="Fayolle C."/>
            <person name="Lindler L.E."/>
            <person name="Carniel E."/>
            <person name="Ravel J."/>
        </authorList>
    </citation>
    <scope>NUCLEOTIDE SEQUENCE [LARGE SCALE GENOMIC DNA]</scope>
    <source>
        <strain>IP 31758</strain>
    </source>
</reference>
<dbReference type="EC" id="2.6.1.81" evidence="1"/>
<dbReference type="EMBL" id="CP000720">
    <property type="protein sequence ID" value="ABS46965.1"/>
    <property type="molecule type" value="Genomic_DNA"/>
</dbReference>
<dbReference type="RefSeq" id="WP_012105173.1">
    <property type="nucleotide sequence ID" value="NC_009708.1"/>
</dbReference>
<dbReference type="SMR" id="A7FIL6"/>
<dbReference type="KEGG" id="ypi:YpsIP31758_2121"/>
<dbReference type="HOGENOM" id="CLU_016922_10_1_6"/>
<dbReference type="UniPathway" id="UPA00185">
    <property type="reaction ID" value="UER00281"/>
</dbReference>
<dbReference type="Proteomes" id="UP000002412">
    <property type="component" value="Chromosome"/>
</dbReference>
<dbReference type="GO" id="GO:0042802">
    <property type="term" value="F:identical protein binding"/>
    <property type="evidence" value="ECO:0007669"/>
    <property type="project" value="TreeGrafter"/>
</dbReference>
<dbReference type="GO" id="GO:0030170">
    <property type="term" value="F:pyridoxal phosphate binding"/>
    <property type="evidence" value="ECO:0007669"/>
    <property type="project" value="UniProtKB-UniRule"/>
</dbReference>
<dbReference type="GO" id="GO:0043825">
    <property type="term" value="F:succinylornithine transaminase activity"/>
    <property type="evidence" value="ECO:0007669"/>
    <property type="project" value="UniProtKB-EC"/>
</dbReference>
<dbReference type="GO" id="GO:1901607">
    <property type="term" value="P:alpha-amino acid biosynthetic process"/>
    <property type="evidence" value="ECO:0007669"/>
    <property type="project" value="UniProtKB-ARBA"/>
</dbReference>
<dbReference type="GO" id="GO:0019544">
    <property type="term" value="P:arginine catabolic process to glutamate"/>
    <property type="evidence" value="ECO:0007669"/>
    <property type="project" value="UniProtKB-UniRule"/>
</dbReference>
<dbReference type="GO" id="GO:0019545">
    <property type="term" value="P:arginine catabolic process to succinate"/>
    <property type="evidence" value="ECO:0007669"/>
    <property type="project" value="UniProtKB-UniRule"/>
</dbReference>
<dbReference type="GO" id="GO:0006593">
    <property type="term" value="P:ornithine catabolic process"/>
    <property type="evidence" value="ECO:0007669"/>
    <property type="project" value="InterPro"/>
</dbReference>
<dbReference type="CDD" id="cd00610">
    <property type="entry name" value="OAT_like"/>
    <property type="match status" value="1"/>
</dbReference>
<dbReference type="FunFam" id="3.40.640.10:FF:000004">
    <property type="entry name" value="Acetylornithine aminotransferase"/>
    <property type="match status" value="1"/>
</dbReference>
<dbReference type="Gene3D" id="3.90.1150.10">
    <property type="entry name" value="Aspartate Aminotransferase, domain 1"/>
    <property type="match status" value="1"/>
</dbReference>
<dbReference type="Gene3D" id="3.40.640.10">
    <property type="entry name" value="Type I PLP-dependent aspartate aminotransferase-like (Major domain)"/>
    <property type="match status" value="1"/>
</dbReference>
<dbReference type="HAMAP" id="MF_01107">
    <property type="entry name" value="ArgD_aminotrans_3"/>
    <property type="match status" value="1"/>
</dbReference>
<dbReference type="HAMAP" id="MF_01173">
    <property type="entry name" value="AstC_aminotrans_3"/>
    <property type="match status" value="1"/>
</dbReference>
<dbReference type="InterPro" id="IPR017652">
    <property type="entry name" value="Ac/SucOrn_transaminase_bac"/>
</dbReference>
<dbReference type="InterPro" id="IPR004636">
    <property type="entry name" value="AcOrn/SuccOrn_fam"/>
</dbReference>
<dbReference type="InterPro" id="IPR005814">
    <property type="entry name" value="Aminotrans_3"/>
</dbReference>
<dbReference type="InterPro" id="IPR049704">
    <property type="entry name" value="Aminotrans_3_PPA_site"/>
</dbReference>
<dbReference type="InterPro" id="IPR050103">
    <property type="entry name" value="Class-III_PLP-dep_AT"/>
</dbReference>
<dbReference type="InterPro" id="IPR015424">
    <property type="entry name" value="PyrdxlP-dep_Trfase"/>
</dbReference>
<dbReference type="InterPro" id="IPR015421">
    <property type="entry name" value="PyrdxlP-dep_Trfase_major"/>
</dbReference>
<dbReference type="InterPro" id="IPR015422">
    <property type="entry name" value="PyrdxlP-dep_Trfase_small"/>
</dbReference>
<dbReference type="InterPro" id="IPR026330">
    <property type="entry name" value="SOAT"/>
</dbReference>
<dbReference type="NCBIfam" id="TIGR03246">
    <property type="entry name" value="arg_catab_astC"/>
    <property type="match status" value="1"/>
</dbReference>
<dbReference type="NCBIfam" id="TIGR00707">
    <property type="entry name" value="argD"/>
    <property type="match status" value="1"/>
</dbReference>
<dbReference type="NCBIfam" id="NF002325">
    <property type="entry name" value="PRK01278.1"/>
    <property type="match status" value="1"/>
</dbReference>
<dbReference type="NCBIfam" id="NF003468">
    <property type="entry name" value="PRK05093.1"/>
    <property type="match status" value="1"/>
</dbReference>
<dbReference type="NCBIfam" id="NF009047">
    <property type="entry name" value="PRK12381.1"/>
    <property type="match status" value="1"/>
</dbReference>
<dbReference type="PANTHER" id="PTHR11986">
    <property type="entry name" value="AMINOTRANSFERASE CLASS III"/>
    <property type="match status" value="1"/>
</dbReference>
<dbReference type="PANTHER" id="PTHR11986:SF113">
    <property type="entry name" value="SUCCINYLORNITHINE TRANSAMINASE"/>
    <property type="match status" value="1"/>
</dbReference>
<dbReference type="Pfam" id="PF00202">
    <property type="entry name" value="Aminotran_3"/>
    <property type="match status" value="1"/>
</dbReference>
<dbReference type="PIRSF" id="PIRSF000521">
    <property type="entry name" value="Transaminase_4ab_Lys_Orn"/>
    <property type="match status" value="1"/>
</dbReference>
<dbReference type="SUPFAM" id="SSF53383">
    <property type="entry name" value="PLP-dependent transferases"/>
    <property type="match status" value="1"/>
</dbReference>
<dbReference type="PROSITE" id="PS00600">
    <property type="entry name" value="AA_TRANSFER_CLASS_3"/>
    <property type="match status" value="1"/>
</dbReference>
<accession>A7FIL6</accession>
<keyword id="KW-0032">Aminotransferase</keyword>
<keyword id="KW-0056">Arginine metabolism</keyword>
<keyword id="KW-0663">Pyridoxal phosphate</keyword>
<keyword id="KW-0808">Transferase</keyword>
<sequence length="414" mass="44206">MEQPSPVTRQSFDEWIVPTYAPADFIVVRGEGSTLWDQQGKSYIDFAGGIAVNALGHGHPAVRAALIEQADKVWHLGNGYTNEPVLRLAKQLIDATFAEKVFFCNSGAEANEAALKLARKYALDNFANKAGQQGEKNQIVAFRNAFHGRTLFTVSAGGQPKYSQDFAPLPGGIHHGIFNDLASAEQLITDQTCAVIVEPIQGEGGVLPADKEFLHGLRALCDRHNALLIFDEIQTGVGRTGELYAYMHYGVSPDVLTSAKALGGGFPIGAMLTTTKYASALSVGSHGTTFGGNPLACAVAGTVLSLINQPTLLAGVKARHQWFIDELAEINARHNVFAEIRGRGLLIGCVLNAQYAGKSKEIVQAAAQYGLIALIAGPDVVRFAPSLIISPKEIKEGLARLAMGIEQVCQKVTS</sequence>